<organismHost>
    <name type="scientific">Bos taurus</name>
    <name type="common">Bovine</name>
    <dbReference type="NCBI Taxonomy" id="9913"/>
</organismHost>
<organismHost>
    <name type="scientific">Felis catus</name>
    <name type="common">Cat</name>
    <name type="synonym">Felis silvestris catus</name>
    <dbReference type="NCBI Taxonomy" id="9685"/>
</organismHost>
<organismHost>
    <name type="scientific">Homo sapiens</name>
    <name type="common">Human</name>
    <dbReference type="NCBI Taxonomy" id="9606"/>
</organismHost>
<organismHost>
    <name type="scientific">Loxodonta africana</name>
    <name type="common">African elephant</name>
    <dbReference type="NCBI Taxonomy" id="9785"/>
</organismHost>
<organismHost>
    <name type="scientific">Microtus agrestis</name>
    <name type="common">Short-tailed field vole</name>
    <dbReference type="NCBI Taxonomy" id="29092"/>
</organismHost>
<organismHost>
    <name type="scientific">Mus musculus</name>
    <name type="common">Mouse</name>
    <dbReference type="NCBI Taxonomy" id="10090"/>
</organismHost>
<organismHost>
    <name type="scientific">Myodes glareolus</name>
    <name type="common">Bank vole</name>
    <name type="synonym">Clethrionomys glareolus</name>
    <dbReference type="NCBI Taxonomy" id="447135"/>
</organismHost>
<evidence type="ECO:0000269" key="1">
    <source>
    </source>
</evidence>
<evidence type="ECO:0000305" key="2"/>
<organism>
    <name type="scientific">Cowpox virus (strain Brighton Red)</name>
    <name type="common">CPV</name>
    <dbReference type="NCBI Taxonomy" id="265872"/>
    <lineage>
        <taxon>Viruses</taxon>
        <taxon>Varidnaviria</taxon>
        <taxon>Bamfordvirae</taxon>
        <taxon>Nucleocytoviricota</taxon>
        <taxon>Pokkesviricetes</taxon>
        <taxon>Chitovirales</taxon>
        <taxon>Poxviridae</taxon>
        <taxon>Chordopoxvirinae</taxon>
        <taxon>Orthopoxvirus</taxon>
        <taxon>Cowpox virus</taxon>
    </lineage>
</organism>
<name>PG023_CWPXB</name>
<protein>
    <recommendedName>
        <fullName>Ankyrin repeat domain-containing protein OPG023</fullName>
    </recommendedName>
    <alternativeName>
        <fullName>Host range protein 1</fullName>
    </alternativeName>
</protein>
<feature type="chain" id="PRO_0000396621" description="Ankyrin repeat domain-containing protein OPG023">
    <location>
        <begin position="1"/>
        <end position="668"/>
    </location>
</feature>
<feature type="repeat" description="ANK 1">
    <location>
        <begin position="31"/>
        <end position="64"/>
    </location>
</feature>
<feature type="repeat" description="ANK 2">
    <location>
        <begin position="101"/>
        <end position="131"/>
    </location>
</feature>
<feature type="repeat" description="ANK 3">
    <location>
        <begin position="135"/>
        <end position="166"/>
    </location>
</feature>
<feature type="repeat" description="ANK 4">
    <location>
        <begin position="199"/>
        <end position="231"/>
    </location>
</feature>
<feature type="repeat" description="ANK 5">
    <location>
        <begin position="235"/>
        <end position="266"/>
    </location>
</feature>
<feature type="repeat" description="ANK 6">
    <location>
        <begin position="277"/>
        <end position="311"/>
    </location>
</feature>
<feature type="repeat" description="ANK 7">
    <location>
        <begin position="334"/>
        <end position="368"/>
    </location>
</feature>
<feature type="repeat" description="ANK 8">
    <location>
        <begin position="458"/>
        <end position="487"/>
    </location>
</feature>
<feature type="repeat" description="ANK 9">
    <location>
        <begin position="491"/>
        <end position="521"/>
    </location>
</feature>
<feature type="region of interest" description="PRANC/F-box-like">
    <location>
        <begin position="586"/>
        <end position="666"/>
    </location>
</feature>
<keyword id="KW-0040">ANK repeat</keyword>
<keyword id="KW-0945">Host-virus interaction</keyword>
<keyword id="KW-1100">Inhibition of host NF-kappa-B by virus</keyword>
<keyword id="KW-1121">Modulation of host cell cycle by virus</keyword>
<keyword id="KW-1123">Modulation of host E3 ubiquitin ligases by virus</keyword>
<keyword id="KW-1130">Modulation of host ubiquitin pathway by virus</keyword>
<keyword id="KW-0677">Repeat</keyword>
<keyword id="KW-0833">Ubl conjugation pathway</keyword>
<dbReference type="EMBL" id="AF482758">
    <property type="protein sequence ID" value="AAM13472.1"/>
    <property type="molecule type" value="Genomic_DNA"/>
</dbReference>
<dbReference type="PIR" id="A29887">
    <property type="entry name" value="HRVZCP"/>
</dbReference>
<dbReference type="RefSeq" id="NP_619814.1">
    <property type="nucleotide sequence ID" value="NC_003663.2"/>
</dbReference>
<dbReference type="SMR" id="Q8QN36"/>
<dbReference type="DNASU" id="1485900"/>
<dbReference type="KEGG" id="vg:1485900"/>
<dbReference type="Proteomes" id="UP000152733">
    <property type="component" value="Segment"/>
</dbReference>
<dbReference type="GO" id="GO:0044071">
    <property type="term" value="P:symbiont-mediated perturbation of host cell cycle progression"/>
    <property type="evidence" value="ECO:0007669"/>
    <property type="project" value="UniProtKB-KW"/>
</dbReference>
<dbReference type="GO" id="GO:0039648">
    <property type="term" value="P:symbiont-mediated perturbation of host ubiquitin-like protein modification"/>
    <property type="evidence" value="ECO:0007669"/>
    <property type="project" value="UniProtKB-KW"/>
</dbReference>
<dbReference type="GO" id="GO:0085034">
    <property type="term" value="P:symbiont-mediated suppression of host NF-kappaB cascade"/>
    <property type="evidence" value="ECO:0007669"/>
    <property type="project" value="UniProtKB-KW"/>
</dbReference>
<dbReference type="Gene3D" id="1.25.40.20">
    <property type="entry name" value="Ankyrin repeat-containing domain"/>
    <property type="match status" value="3"/>
</dbReference>
<dbReference type="InterPro" id="IPR002110">
    <property type="entry name" value="Ankyrin_rpt"/>
</dbReference>
<dbReference type="InterPro" id="IPR036770">
    <property type="entry name" value="Ankyrin_rpt-contain_sf"/>
</dbReference>
<dbReference type="InterPro" id="IPR051165">
    <property type="entry name" value="Multifunctional_ANK_Repeat"/>
</dbReference>
<dbReference type="InterPro" id="IPR018272">
    <property type="entry name" value="PRANC_domain"/>
</dbReference>
<dbReference type="PANTHER" id="PTHR24123">
    <property type="entry name" value="ANKYRIN REPEAT-CONTAINING"/>
    <property type="match status" value="1"/>
</dbReference>
<dbReference type="PANTHER" id="PTHR24123:SF33">
    <property type="entry name" value="PROTEIN HOS4"/>
    <property type="match status" value="1"/>
</dbReference>
<dbReference type="Pfam" id="PF00023">
    <property type="entry name" value="Ank"/>
    <property type="match status" value="1"/>
</dbReference>
<dbReference type="Pfam" id="PF12796">
    <property type="entry name" value="Ank_2"/>
    <property type="match status" value="1"/>
</dbReference>
<dbReference type="Pfam" id="PF09372">
    <property type="entry name" value="PRANC"/>
    <property type="match status" value="1"/>
</dbReference>
<dbReference type="SMART" id="SM00248">
    <property type="entry name" value="ANK"/>
    <property type="match status" value="7"/>
</dbReference>
<dbReference type="SUPFAM" id="SSF48403">
    <property type="entry name" value="Ankyrin repeat"/>
    <property type="match status" value="1"/>
</dbReference>
<dbReference type="PROSITE" id="PS50297">
    <property type="entry name" value="ANK_REP_REGION"/>
    <property type="match status" value="2"/>
</dbReference>
<dbReference type="PROSITE" id="PS50088">
    <property type="entry name" value="ANK_REPEAT"/>
    <property type="match status" value="1"/>
</dbReference>
<sequence>MFDYLENEEVALDELKQMLRDRDPNDTRNQFKNNALHAYLFNEHCNNVEVVKLLLDSGTNPLHKNWRQLTPLGEYTNSRHGKVNKDIAMVLLEATGYSNINDFNIFTYMKSKNVDIDLIKVLVEHGFDFSVKCEKHHSVIENYVMTDDPVPEIIDLFIENGCSVIYEDEDDEYGYAYEEYHSQNDDYQPRNCGTVLHLYIISHLYSESDSRSCVNPEVVKCLINHGINPSSIDKNYCTALQYYIKSSHIDIDIVKLLMKGIDNTAYSYIDDLTCCTRGIMADYLNSDYRYNKDVDLDLVKLFLENGKPHGIMCSIVPLWRNDKETISLILKTMNSDVLQHILIEYITFSDIDISLVEYMLEYGAVVNKEAIHGYFKNINIDSYTMKYLLKKEGGDAVNHLDDGEIPIGHLCKSNYGRYNFYTDTYRQGFRDMSYACPILSTINICLPYLKDINMIDKRGETLLHKAVRYNKQSLVSLLLESGSDVNIRSNNGYTCIAIAINESRNIELLNMLLCHKPTLDCVIDSLREISNIVDNAYAIKQCIRYAMIIDDCISSKIPESISKHYNDYIDICNQELNEMKKIIVGGNTMFSLIFTDHGAKIIHRYANNPELRAYYESKQNKIYVEVYDIISNAIVKHNKIHKNIESVDDNTYISNLPYTIKYKIFEQQ</sequence>
<gene>
    <name type="primary">OPG023</name>
    <name type="synonym">CP77</name>
    <name type="ordered locus">CPXV025</name>
</gene>
<comment type="function">
    <text evidence="1">Substrate-specific adapter of SKP1-containing E3 ubiquitin-protein ligases which mediate the ubiquitination and subsequent proteasomal degradation of host target proteins. Prevents activation and subsequent nuclear localization of NF-kappa-B in infected cells, by targeting NF-kappa-B RELA subunit to the SCF E3 ligase complex.</text>
</comment>
<comment type="subunit">
    <text evidence="1">Interacts (via N-terminus) with host RELA. Interacts (via PRANC/F-box-like domain) with the SKP1 component of the host SCF ubiquitin ligase complex.</text>
</comment>
<comment type="similarity">
    <text evidence="2">Belongs to the orthopoxvirus OPG023 family.</text>
</comment>
<proteinExistence type="evidence at protein level"/>
<reference key="1">
    <citation type="submission" date="2003-05" db="EMBL/GenBank/DDBJ databases">
        <authorList>
            <person name="Dietrich F.S."/>
            <person name="Ray C.A."/>
            <person name="Sharma D.A."/>
            <person name="Allen A."/>
            <person name="Pickup D.J."/>
        </authorList>
    </citation>
    <scope>NUCLEOTIDE SEQUENCE [LARGE SCALE GENOMIC DNA]</scope>
</reference>
<reference key="2">
    <citation type="journal article" date="2009" name="J. Virol.">
        <title>Poxvirus host range protein CP77 contains an F-box-like domain that is necessary to suppress NF-kappaB activation by tumor necrosis factor alpha but is independent of its host range function.</title>
        <authorList>
            <person name="Chang S.J."/>
            <person name="Hsiao J.C."/>
            <person name="Sonnberg S."/>
            <person name="Chiang C.T."/>
            <person name="Yang M.H."/>
            <person name="Tzou D.L."/>
            <person name="Mercer A.A."/>
            <person name="Chang W."/>
        </authorList>
    </citation>
    <scope>FUNCTION</scope>
    <scope>INTERACTION WITH HOST RELA AND SKP1</scope>
</reference>
<accession>Q8QN36</accession>